<feature type="chain" id="PRO_0000168323" description="L-lactate dehydrogenase 3">
    <location>
        <begin position="1"/>
        <end position="316"/>
    </location>
</feature>
<feature type="active site" description="Proton acceptor" evidence="1">
    <location>
        <position position="178"/>
    </location>
</feature>
<feature type="binding site" evidence="1">
    <location>
        <position position="16"/>
    </location>
    <ligand>
        <name>NAD(+)</name>
        <dbReference type="ChEBI" id="CHEBI:57540"/>
    </ligand>
</feature>
<feature type="binding site" evidence="1">
    <location>
        <position position="37"/>
    </location>
    <ligand>
        <name>NAD(+)</name>
        <dbReference type="ChEBI" id="CHEBI:57540"/>
    </ligand>
</feature>
<feature type="binding site" evidence="1">
    <location>
        <position position="42"/>
    </location>
    <ligand>
        <name>NAD(+)</name>
        <dbReference type="ChEBI" id="CHEBI:57540"/>
    </ligand>
</feature>
<feature type="binding site" evidence="1">
    <location>
        <position position="68"/>
    </location>
    <ligand>
        <name>NAD(+)</name>
        <dbReference type="ChEBI" id="CHEBI:57540"/>
    </ligand>
</feature>
<feature type="binding site" evidence="1">
    <location>
        <position position="91"/>
    </location>
    <ligand>
        <name>substrate</name>
    </ligand>
</feature>
<feature type="binding site" evidence="1">
    <location>
        <position position="104"/>
    </location>
    <ligand>
        <name>NAD(+)</name>
        <dbReference type="ChEBI" id="CHEBI:57540"/>
    </ligand>
</feature>
<feature type="binding site" evidence="1">
    <location>
        <begin position="121"/>
        <end position="123"/>
    </location>
    <ligand>
        <name>NAD(+)</name>
        <dbReference type="ChEBI" id="CHEBI:57540"/>
    </ligand>
</feature>
<feature type="binding site" evidence="1">
    <location>
        <begin position="123"/>
        <end position="126"/>
    </location>
    <ligand>
        <name>substrate</name>
    </ligand>
</feature>
<feature type="binding site" evidence="1">
    <location>
        <position position="146"/>
    </location>
    <ligand>
        <name>NAD(+)</name>
        <dbReference type="ChEBI" id="CHEBI:57540"/>
    </ligand>
</feature>
<feature type="binding site" evidence="1">
    <location>
        <begin position="151"/>
        <end position="154"/>
    </location>
    <ligand>
        <name>substrate</name>
    </ligand>
</feature>
<feature type="binding site" evidence="1">
    <location>
        <position position="156"/>
    </location>
    <ligand>
        <name>beta-D-fructose 1,6-bisphosphate</name>
        <dbReference type="ChEBI" id="CHEBI:32966"/>
        <note>allosteric activator</note>
    </ligand>
</feature>
<feature type="binding site" evidence="1">
    <location>
        <position position="171"/>
    </location>
    <ligand>
        <name>beta-D-fructose 1,6-bisphosphate</name>
        <dbReference type="ChEBI" id="CHEBI:32966"/>
        <note>allosteric activator</note>
    </ligand>
</feature>
<feature type="binding site" evidence="1">
    <location>
        <position position="233"/>
    </location>
    <ligand>
        <name>substrate</name>
    </ligand>
</feature>
<comment type="function">
    <text evidence="1">Catalyzes the conversion of lactate to pyruvate.</text>
</comment>
<comment type="catalytic activity">
    <reaction evidence="1">
        <text>(S)-lactate + NAD(+) = pyruvate + NADH + H(+)</text>
        <dbReference type="Rhea" id="RHEA:23444"/>
        <dbReference type="ChEBI" id="CHEBI:15361"/>
        <dbReference type="ChEBI" id="CHEBI:15378"/>
        <dbReference type="ChEBI" id="CHEBI:16651"/>
        <dbReference type="ChEBI" id="CHEBI:57540"/>
        <dbReference type="ChEBI" id="CHEBI:57945"/>
        <dbReference type="EC" id="1.1.1.27"/>
    </reaction>
</comment>
<comment type="activity regulation">
    <text evidence="1">Allosterically activated by fructose 1,6-bisphosphate (FBP).</text>
</comment>
<comment type="pathway">
    <text evidence="1">Fermentation; pyruvate fermentation to lactate; (S)-lactate from pyruvate: step 1/1.</text>
</comment>
<comment type="subunit">
    <text evidence="1">Homotetramer.</text>
</comment>
<comment type="subcellular location">
    <subcellularLocation>
        <location evidence="1">Cytoplasm</location>
    </subcellularLocation>
</comment>
<comment type="similarity">
    <text evidence="1">Belongs to the LDH/MDH superfamily. LDH family.</text>
</comment>
<protein>
    <recommendedName>
        <fullName evidence="1">L-lactate dehydrogenase 3</fullName>
        <shortName evidence="1">L-LDH 3</shortName>
        <ecNumber evidence="1">1.1.1.27</ecNumber>
    </recommendedName>
</protein>
<evidence type="ECO:0000255" key="1">
    <source>
        <dbReference type="HAMAP-Rule" id="MF_00488"/>
    </source>
</evidence>
<dbReference type="EC" id="1.1.1.27" evidence="1"/>
<dbReference type="EMBL" id="AE016877">
    <property type="protein sequence ID" value="AAP11868.1"/>
    <property type="molecule type" value="Genomic_DNA"/>
</dbReference>
<dbReference type="RefSeq" id="NP_834667.1">
    <property type="nucleotide sequence ID" value="NC_004722.1"/>
</dbReference>
<dbReference type="RefSeq" id="WP_000820649.1">
    <property type="nucleotide sequence ID" value="NZ_CP138336.1"/>
</dbReference>
<dbReference type="SMR" id="Q815X8"/>
<dbReference type="STRING" id="226900.BC_4996"/>
<dbReference type="KEGG" id="bce:BC4996"/>
<dbReference type="PATRIC" id="fig|226900.8.peg.5146"/>
<dbReference type="HOGENOM" id="CLU_045401_1_1_9"/>
<dbReference type="UniPathway" id="UPA00554">
    <property type="reaction ID" value="UER00611"/>
</dbReference>
<dbReference type="Proteomes" id="UP000001417">
    <property type="component" value="Chromosome"/>
</dbReference>
<dbReference type="GO" id="GO:0005737">
    <property type="term" value="C:cytoplasm"/>
    <property type="evidence" value="ECO:0007669"/>
    <property type="project" value="UniProtKB-SubCell"/>
</dbReference>
<dbReference type="GO" id="GO:0004459">
    <property type="term" value="F:L-lactate dehydrogenase activity"/>
    <property type="evidence" value="ECO:0000318"/>
    <property type="project" value="GO_Central"/>
</dbReference>
<dbReference type="GO" id="GO:0006096">
    <property type="term" value="P:glycolytic process"/>
    <property type="evidence" value="ECO:0007669"/>
    <property type="project" value="UniProtKB-UniRule"/>
</dbReference>
<dbReference type="GO" id="GO:0006089">
    <property type="term" value="P:lactate metabolic process"/>
    <property type="evidence" value="ECO:0000318"/>
    <property type="project" value="GO_Central"/>
</dbReference>
<dbReference type="GO" id="GO:0006090">
    <property type="term" value="P:pyruvate metabolic process"/>
    <property type="evidence" value="ECO:0000318"/>
    <property type="project" value="GO_Central"/>
</dbReference>
<dbReference type="CDD" id="cd05291">
    <property type="entry name" value="HicDH_like"/>
    <property type="match status" value="1"/>
</dbReference>
<dbReference type="FunFam" id="3.90.110.10:FF:000005">
    <property type="entry name" value="L-lactate dehydrogenase"/>
    <property type="match status" value="1"/>
</dbReference>
<dbReference type="FunFam" id="3.40.50.720:FF:000018">
    <property type="entry name" value="Malate dehydrogenase"/>
    <property type="match status" value="1"/>
</dbReference>
<dbReference type="Gene3D" id="3.90.110.10">
    <property type="entry name" value="Lactate dehydrogenase/glycoside hydrolase, family 4, C-terminal"/>
    <property type="match status" value="1"/>
</dbReference>
<dbReference type="Gene3D" id="3.40.50.720">
    <property type="entry name" value="NAD(P)-binding Rossmann-like Domain"/>
    <property type="match status" value="1"/>
</dbReference>
<dbReference type="HAMAP" id="MF_00488">
    <property type="entry name" value="Lactate_dehydrog"/>
    <property type="match status" value="1"/>
</dbReference>
<dbReference type="InterPro" id="IPR001557">
    <property type="entry name" value="L-lactate/malate_DH"/>
</dbReference>
<dbReference type="InterPro" id="IPR011304">
    <property type="entry name" value="L-lactate_DH"/>
</dbReference>
<dbReference type="InterPro" id="IPR018177">
    <property type="entry name" value="L-lactate_DH_AS"/>
</dbReference>
<dbReference type="InterPro" id="IPR022383">
    <property type="entry name" value="Lactate/malate_DH_C"/>
</dbReference>
<dbReference type="InterPro" id="IPR001236">
    <property type="entry name" value="Lactate/malate_DH_N"/>
</dbReference>
<dbReference type="InterPro" id="IPR015955">
    <property type="entry name" value="Lactate_DH/Glyco_Ohase_4_C"/>
</dbReference>
<dbReference type="InterPro" id="IPR036291">
    <property type="entry name" value="NAD(P)-bd_dom_sf"/>
</dbReference>
<dbReference type="NCBIfam" id="TIGR01771">
    <property type="entry name" value="L-LDH-NAD"/>
    <property type="match status" value="1"/>
</dbReference>
<dbReference type="NCBIfam" id="NF000824">
    <property type="entry name" value="PRK00066.1"/>
    <property type="match status" value="1"/>
</dbReference>
<dbReference type="NCBIfam" id="NF004863">
    <property type="entry name" value="PRK06223.1"/>
    <property type="match status" value="1"/>
</dbReference>
<dbReference type="PANTHER" id="PTHR43128">
    <property type="entry name" value="L-2-HYDROXYCARBOXYLATE DEHYDROGENASE (NAD(P)(+))"/>
    <property type="match status" value="1"/>
</dbReference>
<dbReference type="PANTHER" id="PTHR43128:SF16">
    <property type="entry name" value="L-LACTATE DEHYDROGENASE"/>
    <property type="match status" value="1"/>
</dbReference>
<dbReference type="Pfam" id="PF02866">
    <property type="entry name" value="Ldh_1_C"/>
    <property type="match status" value="1"/>
</dbReference>
<dbReference type="Pfam" id="PF00056">
    <property type="entry name" value="Ldh_1_N"/>
    <property type="match status" value="1"/>
</dbReference>
<dbReference type="PIRSF" id="PIRSF000102">
    <property type="entry name" value="Lac_mal_DH"/>
    <property type="match status" value="1"/>
</dbReference>
<dbReference type="PRINTS" id="PR00086">
    <property type="entry name" value="LLDHDRGNASE"/>
</dbReference>
<dbReference type="SUPFAM" id="SSF56327">
    <property type="entry name" value="LDH C-terminal domain-like"/>
    <property type="match status" value="1"/>
</dbReference>
<dbReference type="SUPFAM" id="SSF51735">
    <property type="entry name" value="NAD(P)-binding Rossmann-fold domains"/>
    <property type="match status" value="1"/>
</dbReference>
<dbReference type="PROSITE" id="PS00064">
    <property type="entry name" value="L_LDH"/>
    <property type="match status" value="1"/>
</dbReference>
<accession>Q815X8</accession>
<name>LDH3_BACCR</name>
<keyword id="KW-0021">Allosteric enzyme</keyword>
<keyword id="KW-0963">Cytoplasm</keyword>
<keyword id="KW-0520">NAD</keyword>
<keyword id="KW-0560">Oxidoreductase</keyword>
<keyword id="KW-1185">Reference proteome</keyword>
<proteinExistence type="inferred from homology"/>
<organism>
    <name type="scientific">Bacillus cereus (strain ATCC 14579 / DSM 31 / CCUG 7414 / JCM 2152 / NBRC 15305 / NCIMB 9373 / NCTC 2599 / NRRL B-3711)</name>
    <dbReference type="NCBI Taxonomy" id="226900"/>
    <lineage>
        <taxon>Bacteria</taxon>
        <taxon>Bacillati</taxon>
        <taxon>Bacillota</taxon>
        <taxon>Bacilli</taxon>
        <taxon>Bacillales</taxon>
        <taxon>Bacillaceae</taxon>
        <taxon>Bacillus</taxon>
        <taxon>Bacillus cereus group</taxon>
    </lineage>
</organism>
<reference key="1">
    <citation type="journal article" date="2003" name="Nature">
        <title>Genome sequence of Bacillus cereus and comparative analysis with Bacillus anthracis.</title>
        <authorList>
            <person name="Ivanova N."/>
            <person name="Sorokin A."/>
            <person name="Anderson I."/>
            <person name="Galleron N."/>
            <person name="Candelon B."/>
            <person name="Kapatral V."/>
            <person name="Bhattacharyya A."/>
            <person name="Reznik G."/>
            <person name="Mikhailova N."/>
            <person name="Lapidus A."/>
            <person name="Chu L."/>
            <person name="Mazur M."/>
            <person name="Goltsman E."/>
            <person name="Larsen N."/>
            <person name="D'Souza M."/>
            <person name="Walunas T."/>
            <person name="Grechkin Y."/>
            <person name="Pusch G."/>
            <person name="Haselkorn R."/>
            <person name="Fonstein M."/>
            <person name="Ehrlich S.D."/>
            <person name="Overbeek R."/>
            <person name="Kyrpides N.C."/>
        </authorList>
    </citation>
    <scope>NUCLEOTIDE SEQUENCE [LARGE SCALE GENOMIC DNA]</scope>
    <source>
        <strain>ATCC 14579 / DSM 31 / CCUG 7414 / JCM 2152 / NBRC 15305 / NCIMB 9373 / NCTC 2599 / NRRL B-3711</strain>
    </source>
</reference>
<gene>
    <name evidence="1" type="primary">ldh3</name>
    <name type="ordered locus">BC_4996</name>
</gene>
<sequence length="316" mass="34698">MKRHTRKIAIIGTGLVGSSCAYSIVNQGICEELLLIDINHERAVGEAMDLSHCINFTNTRTKVYAGSYEDCKDMDIVIITAGPAPKPGQSRLDTLGASAKIMESVVGGVMASGFDGIFLLASNPVDIITYQVWKLSGLPRNRVIGTGTSLDSSRLRTILSEMLHVDPRSIHGYSLGEHGDSQMVAWSHVTVGGKPILQILEEQKERFGEIDLDEIVEKTAKAGWEIYKRKGTTYYGIGNSLAYIASSIFNDDHRVIAVSAILDGEYGEYDICTGVPAIITRDGIREVVELNLTEDEESRFAKSNDILRDYMKTIGY</sequence>